<feature type="chain" id="PRO_1000101014" description="Large ribosomal subunit protein bL36">
    <location>
        <begin position="1"/>
        <end position="38"/>
    </location>
</feature>
<reference key="1">
    <citation type="submission" date="2008-05" db="EMBL/GenBank/DDBJ databases">
        <title>Complete sequence of Chlorobium limicola DSM 245.</title>
        <authorList>
            <consortium name="US DOE Joint Genome Institute"/>
            <person name="Lucas S."/>
            <person name="Copeland A."/>
            <person name="Lapidus A."/>
            <person name="Glavina del Rio T."/>
            <person name="Dalin E."/>
            <person name="Tice H."/>
            <person name="Bruce D."/>
            <person name="Goodwin L."/>
            <person name="Pitluck S."/>
            <person name="Schmutz J."/>
            <person name="Larimer F."/>
            <person name="Land M."/>
            <person name="Hauser L."/>
            <person name="Kyrpides N."/>
            <person name="Ovchinnikova G."/>
            <person name="Zhao F."/>
            <person name="Li T."/>
            <person name="Liu Z."/>
            <person name="Overmann J."/>
            <person name="Bryant D.A."/>
            <person name="Richardson P."/>
        </authorList>
    </citation>
    <scope>NUCLEOTIDE SEQUENCE [LARGE SCALE GENOMIC DNA]</scope>
    <source>
        <strain>DSM 245 / NBRC 103803 / 6330</strain>
    </source>
</reference>
<protein>
    <recommendedName>
        <fullName evidence="1">Large ribosomal subunit protein bL36</fullName>
    </recommendedName>
    <alternativeName>
        <fullName evidence="2">50S ribosomal protein L36</fullName>
    </alternativeName>
</protein>
<organism>
    <name type="scientific">Chlorobium limicola (strain DSM 245 / NBRC 103803 / 6330)</name>
    <dbReference type="NCBI Taxonomy" id="290315"/>
    <lineage>
        <taxon>Bacteria</taxon>
        <taxon>Pseudomonadati</taxon>
        <taxon>Chlorobiota</taxon>
        <taxon>Chlorobiia</taxon>
        <taxon>Chlorobiales</taxon>
        <taxon>Chlorobiaceae</taxon>
        <taxon>Chlorobium/Pelodictyon group</taxon>
        <taxon>Chlorobium</taxon>
    </lineage>
</organism>
<dbReference type="EMBL" id="CP001097">
    <property type="protein sequence ID" value="ACD91230.1"/>
    <property type="molecule type" value="Genomic_DNA"/>
</dbReference>
<dbReference type="RefSeq" id="WP_010933819.1">
    <property type="nucleotide sequence ID" value="NC_010803.1"/>
</dbReference>
<dbReference type="SMR" id="B3EGW7"/>
<dbReference type="STRING" id="290315.Clim_2206"/>
<dbReference type="KEGG" id="cli:Clim_2206"/>
<dbReference type="eggNOG" id="COG0257">
    <property type="taxonomic scope" value="Bacteria"/>
</dbReference>
<dbReference type="HOGENOM" id="CLU_135723_6_2_10"/>
<dbReference type="OrthoDB" id="9801558at2"/>
<dbReference type="Proteomes" id="UP000008841">
    <property type="component" value="Chromosome"/>
</dbReference>
<dbReference type="GO" id="GO:0005737">
    <property type="term" value="C:cytoplasm"/>
    <property type="evidence" value="ECO:0007669"/>
    <property type="project" value="UniProtKB-ARBA"/>
</dbReference>
<dbReference type="GO" id="GO:1990904">
    <property type="term" value="C:ribonucleoprotein complex"/>
    <property type="evidence" value="ECO:0007669"/>
    <property type="project" value="UniProtKB-KW"/>
</dbReference>
<dbReference type="GO" id="GO:0005840">
    <property type="term" value="C:ribosome"/>
    <property type="evidence" value="ECO:0007669"/>
    <property type="project" value="UniProtKB-KW"/>
</dbReference>
<dbReference type="GO" id="GO:0003735">
    <property type="term" value="F:structural constituent of ribosome"/>
    <property type="evidence" value="ECO:0007669"/>
    <property type="project" value="InterPro"/>
</dbReference>
<dbReference type="GO" id="GO:0006412">
    <property type="term" value="P:translation"/>
    <property type="evidence" value="ECO:0007669"/>
    <property type="project" value="UniProtKB-UniRule"/>
</dbReference>
<dbReference type="HAMAP" id="MF_00251">
    <property type="entry name" value="Ribosomal_bL36"/>
    <property type="match status" value="1"/>
</dbReference>
<dbReference type="InterPro" id="IPR000473">
    <property type="entry name" value="Ribosomal_bL36"/>
</dbReference>
<dbReference type="InterPro" id="IPR035977">
    <property type="entry name" value="Ribosomal_bL36_sp"/>
</dbReference>
<dbReference type="NCBIfam" id="TIGR01022">
    <property type="entry name" value="rpmJ_bact"/>
    <property type="match status" value="1"/>
</dbReference>
<dbReference type="PANTHER" id="PTHR42888">
    <property type="entry name" value="50S RIBOSOMAL PROTEIN L36, CHLOROPLASTIC"/>
    <property type="match status" value="1"/>
</dbReference>
<dbReference type="PANTHER" id="PTHR42888:SF1">
    <property type="entry name" value="LARGE RIBOSOMAL SUBUNIT PROTEIN BL36C"/>
    <property type="match status" value="1"/>
</dbReference>
<dbReference type="Pfam" id="PF00444">
    <property type="entry name" value="Ribosomal_L36"/>
    <property type="match status" value="1"/>
</dbReference>
<dbReference type="SUPFAM" id="SSF57840">
    <property type="entry name" value="Ribosomal protein L36"/>
    <property type="match status" value="1"/>
</dbReference>
<dbReference type="PROSITE" id="PS00828">
    <property type="entry name" value="RIBOSOMAL_L36"/>
    <property type="match status" value="1"/>
</dbReference>
<gene>
    <name evidence="1" type="primary">rpmJ</name>
    <name type="ordered locus">Clim_2206</name>
</gene>
<sequence>MKIYSSIKKRCEHCRIIKRKGKRFVICKVNPSHKQRQG</sequence>
<proteinExistence type="inferred from homology"/>
<comment type="similarity">
    <text evidence="1">Belongs to the bacterial ribosomal protein bL36 family.</text>
</comment>
<accession>B3EGW7</accession>
<name>RL36_CHLL2</name>
<keyword id="KW-0687">Ribonucleoprotein</keyword>
<keyword id="KW-0689">Ribosomal protein</keyword>
<evidence type="ECO:0000255" key="1">
    <source>
        <dbReference type="HAMAP-Rule" id="MF_00251"/>
    </source>
</evidence>
<evidence type="ECO:0000305" key="2"/>